<keyword id="KW-0998">Cell outer membrane</keyword>
<keyword id="KW-0449">Lipoprotein</keyword>
<keyword id="KW-0472">Membrane</keyword>
<keyword id="KW-0564">Palmitate</keyword>
<keyword id="KW-0732">Signal</keyword>
<sequence>MKKLFLVIVPLLLSLLATSCSTSNVPPPTPLAEKPPKEAKVKVKWSRKTGNGNGGLPIYNVSPTYANNTVFVPNQNGVAYGLSITDGKIVWKHDTGTILSSQPNTIANAVIFGSVKGVLTAVDQKDGKILWRTDAPSSIFSQPTIYSNHLYTHTHDGSVTSFDATNGSKVWNVTNNIPEITLPSDSSPIILNDTVMVGSAFGTVLGFTLESGDRTINLPVAIAHGSSPADKMVDITANPMLYGNYLIFAAFQGAIVALDKDTGKMLWAKKASIINNMAINNGVIFTAQANSELKAYDIQTGDTVWTQSTLEWRKITAPIYYKGLIVVADYQGFLHFFNSLNGDYLGRYKLTPKSDFFDYGISGQLVPTEKGILIEADSGTTYLVDAHSDRVIYENILGDYKVNRGKNVKFIYPLEQPKSGSIESSPKALPDKKVDSNKTSKNDTDSNPATTATSTKDIQNPANQEMINSTPVSNTSTKAEKNENTDSSIAEGVVTSNKVQPTPKGKNATIIIGDFSKGDSD</sequence>
<organism>
    <name type="scientific">Francisella salina</name>
    <dbReference type="NCBI Taxonomy" id="573569"/>
    <lineage>
        <taxon>Bacteria</taxon>
        <taxon>Pseudomonadati</taxon>
        <taxon>Pseudomonadota</taxon>
        <taxon>Gammaproteobacteria</taxon>
        <taxon>Thiotrichales</taxon>
        <taxon>Francisellaceae</taxon>
        <taxon>Francisella</taxon>
    </lineage>
</organism>
<reference key="1">
    <citation type="submission" date="2011-05" db="EMBL/GenBank/DDBJ databases">
        <title>The complete genome of Francisella sp. TX077308.</title>
        <authorList>
            <person name="Kuske C.R."/>
            <person name="Challacombe J.F."/>
            <person name="Siddaramappa S."/>
            <person name="Petersen J.M."/>
        </authorList>
    </citation>
    <scope>NUCLEOTIDE SEQUENCE [LARGE SCALE GENOMIC DNA]</scope>
    <source>
        <strain>TX07-7308</strain>
    </source>
</reference>
<protein>
    <recommendedName>
        <fullName evidence="1">Outer membrane protein assembly factor BamB</fullName>
    </recommendedName>
</protein>
<dbReference type="EMBL" id="CP002872">
    <property type="protein sequence ID" value="AEI35593.1"/>
    <property type="molecule type" value="Genomic_DNA"/>
</dbReference>
<dbReference type="RefSeq" id="WP_013922435.1">
    <property type="nucleotide sequence ID" value="NC_015696.1"/>
</dbReference>
<dbReference type="SMR" id="F8GAQ8"/>
<dbReference type="STRING" id="573569.F7308_0666"/>
<dbReference type="KEGG" id="frt:F7308_0666"/>
<dbReference type="eggNOG" id="COG1520">
    <property type="taxonomic scope" value="Bacteria"/>
</dbReference>
<dbReference type="HOGENOM" id="CLU_027480_0_1_6"/>
<dbReference type="OrthoDB" id="5173551at2"/>
<dbReference type="GO" id="GO:0009279">
    <property type="term" value="C:cell outer membrane"/>
    <property type="evidence" value="ECO:0007669"/>
    <property type="project" value="UniProtKB-SubCell"/>
</dbReference>
<dbReference type="GO" id="GO:0043165">
    <property type="term" value="P:Gram-negative-bacterium-type cell outer membrane assembly"/>
    <property type="evidence" value="ECO:0007669"/>
    <property type="project" value="UniProtKB-UniRule"/>
</dbReference>
<dbReference type="GO" id="GO:0051205">
    <property type="term" value="P:protein insertion into membrane"/>
    <property type="evidence" value="ECO:0007669"/>
    <property type="project" value="UniProtKB-UniRule"/>
</dbReference>
<dbReference type="CDD" id="cd10276">
    <property type="entry name" value="BamB_YfgL"/>
    <property type="match status" value="1"/>
</dbReference>
<dbReference type="Gene3D" id="2.130.10.10">
    <property type="entry name" value="YVTN repeat-like/Quinoprotein amine dehydrogenase"/>
    <property type="match status" value="1"/>
</dbReference>
<dbReference type="HAMAP" id="MF_00923">
    <property type="entry name" value="OM_assembly_BamB"/>
    <property type="match status" value="1"/>
</dbReference>
<dbReference type="InterPro" id="IPR017687">
    <property type="entry name" value="BamB"/>
</dbReference>
<dbReference type="InterPro" id="IPR018391">
    <property type="entry name" value="PQQ_b-propeller_rpt"/>
</dbReference>
<dbReference type="InterPro" id="IPR002372">
    <property type="entry name" value="PQQ_rpt_dom"/>
</dbReference>
<dbReference type="InterPro" id="IPR011047">
    <property type="entry name" value="Quinoprotein_ADH-like_sf"/>
</dbReference>
<dbReference type="InterPro" id="IPR015943">
    <property type="entry name" value="WD40/YVTN_repeat-like_dom_sf"/>
</dbReference>
<dbReference type="PANTHER" id="PTHR34512">
    <property type="entry name" value="CELL SURFACE PROTEIN"/>
    <property type="match status" value="1"/>
</dbReference>
<dbReference type="PANTHER" id="PTHR34512:SF30">
    <property type="entry name" value="OUTER MEMBRANE PROTEIN ASSEMBLY FACTOR BAMB"/>
    <property type="match status" value="1"/>
</dbReference>
<dbReference type="Pfam" id="PF13360">
    <property type="entry name" value="PQQ_2"/>
    <property type="match status" value="1"/>
</dbReference>
<dbReference type="SMART" id="SM00564">
    <property type="entry name" value="PQQ"/>
    <property type="match status" value="7"/>
</dbReference>
<dbReference type="SUPFAM" id="SSF50998">
    <property type="entry name" value="Quinoprotein alcohol dehydrogenase-like"/>
    <property type="match status" value="1"/>
</dbReference>
<dbReference type="PROSITE" id="PS51257">
    <property type="entry name" value="PROKAR_LIPOPROTEIN"/>
    <property type="match status" value="1"/>
</dbReference>
<gene>
    <name evidence="1" type="primary">bamB</name>
    <name type="ordered locus">F7308_0666</name>
</gene>
<accession>F8GAQ8</accession>
<evidence type="ECO:0000255" key="1">
    <source>
        <dbReference type="HAMAP-Rule" id="MF_00923"/>
    </source>
</evidence>
<evidence type="ECO:0000256" key="2">
    <source>
        <dbReference type="SAM" id="MobiDB-lite"/>
    </source>
</evidence>
<proteinExistence type="inferred from homology"/>
<feature type="signal peptide" evidence="1">
    <location>
        <begin position="1"/>
        <end position="19"/>
    </location>
</feature>
<feature type="chain" id="PRO_0000417679" description="Outer membrane protein assembly factor BamB">
    <location>
        <begin position="20"/>
        <end position="521"/>
    </location>
</feature>
<feature type="region of interest" description="Disordered" evidence="2">
    <location>
        <begin position="418"/>
        <end position="521"/>
    </location>
</feature>
<feature type="compositionally biased region" description="Basic and acidic residues" evidence="2">
    <location>
        <begin position="429"/>
        <end position="444"/>
    </location>
</feature>
<feature type="compositionally biased region" description="Polar residues" evidence="2">
    <location>
        <begin position="445"/>
        <end position="477"/>
    </location>
</feature>
<feature type="lipid moiety-binding region" description="N-palmitoyl cysteine" evidence="1">
    <location>
        <position position="20"/>
    </location>
</feature>
<feature type="lipid moiety-binding region" description="S-diacylglycerol cysteine" evidence="1">
    <location>
        <position position="20"/>
    </location>
</feature>
<name>BAMB_FRAST</name>
<comment type="function">
    <text evidence="1">Part of the outer membrane protein assembly complex, which is involved in assembly and insertion of beta-barrel proteins into the outer membrane.</text>
</comment>
<comment type="subunit">
    <text evidence="1">Part of the Bam complex.</text>
</comment>
<comment type="subcellular location">
    <subcellularLocation>
        <location evidence="1">Cell outer membrane</location>
        <topology evidence="1">Lipid-anchor</topology>
    </subcellularLocation>
</comment>
<comment type="similarity">
    <text evidence="1">Belongs to the BamB family.</text>
</comment>